<reference key="1">
    <citation type="journal article" date="2010" name="J. Bacteriol.">
        <title>Complete genome sequence of the aerobic facultative methanotroph Methylocella silvestris BL2.</title>
        <authorList>
            <person name="Chen Y."/>
            <person name="Crombie A."/>
            <person name="Rahman M.T."/>
            <person name="Dedysh S.N."/>
            <person name="Liesack W."/>
            <person name="Stott M.B."/>
            <person name="Alam M."/>
            <person name="Theisen A.R."/>
            <person name="Murrell J.C."/>
            <person name="Dunfield P.F."/>
        </authorList>
    </citation>
    <scope>NUCLEOTIDE SEQUENCE [LARGE SCALE GENOMIC DNA]</scope>
    <source>
        <strain>DSM 15510 / CIP 108128 / LMG 27833 / NCIMB 13906 / BL2</strain>
    </source>
</reference>
<sequence>MSRCVITLNAGSSSIKFALFREGLTQEGSAKELTPMAIGLAEMVGEERRITVHDGAGAKIYEVKRTEHVDAPFHAEALRRILAWRQSAFPDAEVVAAGHRVVHGGVHYSAPVIVTDEVLKYLHTLIPLAPLHEPYNIAGILGAREAWPHVEQVACFDTAFHRTHPFVNDVFALPRRFYDEGVRRYGFHGLSYEYIVRRLREIAPLHAAGRVVVAHLGNGASMCAIRDGLSVASSMGFTALDGLPMGTRCGQLDPGVVLYLMQEKKMSAAEITDLLYRESGLKGLSGLSHDMRELEAADTLEAQQAIEYFVFRIRRELGGLAAVLKGIDAIVFCGGIGENSRHVRERVLEGMEWIGVELDRSANSANAEVISSERSRTRVFVIPTDEEGMIARHTLALLDQMAAA</sequence>
<organism>
    <name type="scientific">Methylocella silvestris (strain DSM 15510 / CIP 108128 / LMG 27833 / NCIMB 13906 / BL2)</name>
    <dbReference type="NCBI Taxonomy" id="395965"/>
    <lineage>
        <taxon>Bacteria</taxon>
        <taxon>Pseudomonadati</taxon>
        <taxon>Pseudomonadota</taxon>
        <taxon>Alphaproteobacteria</taxon>
        <taxon>Hyphomicrobiales</taxon>
        <taxon>Beijerinckiaceae</taxon>
        <taxon>Methylocella</taxon>
    </lineage>
</organism>
<name>ACKA_METSB</name>
<accession>B8EIS2</accession>
<evidence type="ECO:0000255" key="1">
    <source>
        <dbReference type="HAMAP-Rule" id="MF_00020"/>
    </source>
</evidence>
<comment type="function">
    <text evidence="1">Catalyzes the formation of acetyl phosphate from acetate and ATP. Can also catalyze the reverse reaction.</text>
</comment>
<comment type="catalytic activity">
    <reaction evidence="1">
        <text>acetate + ATP = acetyl phosphate + ADP</text>
        <dbReference type="Rhea" id="RHEA:11352"/>
        <dbReference type="ChEBI" id="CHEBI:22191"/>
        <dbReference type="ChEBI" id="CHEBI:30089"/>
        <dbReference type="ChEBI" id="CHEBI:30616"/>
        <dbReference type="ChEBI" id="CHEBI:456216"/>
        <dbReference type="EC" id="2.7.2.1"/>
    </reaction>
</comment>
<comment type="cofactor">
    <cofactor evidence="1">
        <name>Mg(2+)</name>
        <dbReference type="ChEBI" id="CHEBI:18420"/>
    </cofactor>
    <cofactor evidence="1">
        <name>Mn(2+)</name>
        <dbReference type="ChEBI" id="CHEBI:29035"/>
    </cofactor>
    <text evidence="1">Mg(2+). Can also accept Mn(2+).</text>
</comment>
<comment type="pathway">
    <text evidence="1">Metabolic intermediate biosynthesis; acetyl-CoA biosynthesis; acetyl-CoA from acetate: step 1/2.</text>
</comment>
<comment type="subunit">
    <text evidence="1">Homodimer.</text>
</comment>
<comment type="subcellular location">
    <subcellularLocation>
        <location evidence="1">Cytoplasm</location>
    </subcellularLocation>
</comment>
<comment type="similarity">
    <text evidence="1">Belongs to the acetokinase family.</text>
</comment>
<protein>
    <recommendedName>
        <fullName evidence="1">Acetate kinase</fullName>
        <ecNumber evidence="1">2.7.2.1</ecNumber>
    </recommendedName>
    <alternativeName>
        <fullName evidence="1">Acetokinase</fullName>
    </alternativeName>
</protein>
<proteinExistence type="inferred from homology"/>
<gene>
    <name evidence="1" type="primary">ackA</name>
    <name type="ordered locus">Msil_2978</name>
</gene>
<dbReference type="EC" id="2.7.2.1" evidence="1"/>
<dbReference type="EMBL" id="CP001280">
    <property type="protein sequence ID" value="ACK51889.1"/>
    <property type="molecule type" value="Genomic_DNA"/>
</dbReference>
<dbReference type="RefSeq" id="WP_012591958.1">
    <property type="nucleotide sequence ID" value="NC_011666.1"/>
</dbReference>
<dbReference type="SMR" id="B8EIS2"/>
<dbReference type="STRING" id="395965.Msil_2978"/>
<dbReference type="KEGG" id="msl:Msil_2978"/>
<dbReference type="eggNOG" id="COG0282">
    <property type="taxonomic scope" value="Bacteria"/>
</dbReference>
<dbReference type="HOGENOM" id="CLU_020352_0_0_5"/>
<dbReference type="OrthoDB" id="9802453at2"/>
<dbReference type="UniPathway" id="UPA00340">
    <property type="reaction ID" value="UER00458"/>
</dbReference>
<dbReference type="Proteomes" id="UP000002257">
    <property type="component" value="Chromosome"/>
</dbReference>
<dbReference type="GO" id="GO:0005829">
    <property type="term" value="C:cytosol"/>
    <property type="evidence" value="ECO:0007669"/>
    <property type="project" value="TreeGrafter"/>
</dbReference>
<dbReference type="GO" id="GO:0008776">
    <property type="term" value="F:acetate kinase activity"/>
    <property type="evidence" value="ECO:0007669"/>
    <property type="project" value="UniProtKB-UniRule"/>
</dbReference>
<dbReference type="GO" id="GO:0005524">
    <property type="term" value="F:ATP binding"/>
    <property type="evidence" value="ECO:0007669"/>
    <property type="project" value="UniProtKB-KW"/>
</dbReference>
<dbReference type="GO" id="GO:0000287">
    <property type="term" value="F:magnesium ion binding"/>
    <property type="evidence" value="ECO:0007669"/>
    <property type="project" value="UniProtKB-UniRule"/>
</dbReference>
<dbReference type="GO" id="GO:0006083">
    <property type="term" value="P:acetate metabolic process"/>
    <property type="evidence" value="ECO:0007669"/>
    <property type="project" value="TreeGrafter"/>
</dbReference>
<dbReference type="GO" id="GO:0006085">
    <property type="term" value="P:acetyl-CoA biosynthetic process"/>
    <property type="evidence" value="ECO:0007669"/>
    <property type="project" value="UniProtKB-UniRule"/>
</dbReference>
<dbReference type="Gene3D" id="3.30.420.40">
    <property type="match status" value="2"/>
</dbReference>
<dbReference type="HAMAP" id="MF_00020">
    <property type="entry name" value="Acetate_kinase"/>
    <property type="match status" value="1"/>
</dbReference>
<dbReference type="InterPro" id="IPR004372">
    <property type="entry name" value="Ac/propionate_kinase"/>
</dbReference>
<dbReference type="InterPro" id="IPR000890">
    <property type="entry name" value="Aliphatic_acid_kin_short-chain"/>
</dbReference>
<dbReference type="InterPro" id="IPR023865">
    <property type="entry name" value="Aliphatic_acid_kinase_CS"/>
</dbReference>
<dbReference type="InterPro" id="IPR043129">
    <property type="entry name" value="ATPase_NBD"/>
</dbReference>
<dbReference type="NCBIfam" id="TIGR00016">
    <property type="entry name" value="ackA"/>
    <property type="match status" value="1"/>
</dbReference>
<dbReference type="PANTHER" id="PTHR21060">
    <property type="entry name" value="ACETATE KINASE"/>
    <property type="match status" value="1"/>
</dbReference>
<dbReference type="PANTHER" id="PTHR21060:SF21">
    <property type="entry name" value="ACETATE KINASE"/>
    <property type="match status" value="1"/>
</dbReference>
<dbReference type="Pfam" id="PF00871">
    <property type="entry name" value="Acetate_kinase"/>
    <property type="match status" value="1"/>
</dbReference>
<dbReference type="PIRSF" id="PIRSF000722">
    <property type="entry name" value="Acetate_prop_kin"/>
    <property type="match status" value="1"/>
</dbReference>
<dbReference type="PRINTS" id="PR00471">
    <property type="entry name" value="ACETATEKNASE"/>
</dbReference>
<dbReference type="SUPFAM" id="SSF53067">
    <property type="entry name" value="Actin-like ATPase domain"/>
    <property type="match status" value="2"/>
</dbReference>
<dbReference type="PROSITE" id="PS01075">
    <property type="entry name" value="ACETATE_KINASE_1"/>
    <property type="match status" value="1"/>
</dbReference>
<dbReference type="PROSITE" id="PS01076">
    <property type="entry name" value="ACETATE_KINASE_2"/>
    <property type="match status" value="1"/>
</dbReference>
<feature type="chain" id="PRO_1000116805" description="Acetate kinase">
    <location>
        <begin position="1"/>
        <end position="404"/>
    </location>
</feature>
<feature type="active site" description="Proton donor/acceptor" evidence="1">
    <location>
        <position position="157"/>
    </location>
</feature>
<feature type="binding site" evidence="1">
    <location>
        <position position="9"/>
    </location>
    <ligand>
        <name>Mg(2+)</name>
        <dbReference type="ChEBI" id="CHEBI:18420"/>
    </ligand>
</feature>
<feature type="binding site" evidence="1">
    <location>
        <position position="16"/>
    </location>
    <ligand>
        <name>ATP</name>
        <dbReference type="ChEBI" id="CHEBI:30616"/>
    </ligand>
</feature>
<feature type="binding site" evidence="1">
    <location>
        <position position="100"/>
    </location>
    <ligand>
        <name>substrate</name>
    </ligand>
</feature>
<feature type="binding site" evidence="1">
    <location>
        <begin position="215"/>
        <end position="219"/>
    </location>
    <ligand>
        <name>ATP</name>
        <dbReference type="ChEBI" id="CHEBI:30616"/>
    </ligand>
</feature>
<feature type="binding site" evidence="1">
    <location>
        <begin position="290"/>
        <end position="292"/>
    </location>
    <ligand>
        <name>ATP</name>
        <dbReference type="ChEBI" id="CHEBI:30616"/>
    </ligand>
</feature>
<feature type="binding site" evidence="1">
    <location>
        <begin position="335"/>
        <end position="339"/>
    </location>
    <ligand>
        <name>ATP</name>
        <dbReference type="ChEBI" id="CHEBI:30616"/>
    </ligand>
</feature>
<feature type="binding site" evidence="1">
    <location>
        <position position="386"/>
    </location>
    <ligand>
        <name>Mg(2+)</name>
        <dbReference type="ChEBI" id="CHEBI:18420"/>
    </ligand>
</feature>
<feature type="site" description="Transition state stabilizer" evidence="1">
    <location>
        <position position="188"/>
    </location>
</feature>
<feature type="site" description="Transition state stabilizer" evidence="1">
    <location>
        <position position="248"/>
    </location>
</feature>
<keyword id="KW-0067">ATP-binding</keyword>
<keyword id="KW-0963">Cytoplasm</keyword>
<keyword id="KW-0418">Kinase</keyword>
<keyword id="KW-0460">Magnesium</keyword>
<keyword id="KW-0479">Metal-binding</keyword>
<keyword id="KW-0547">Nucleotide-binding</keyword>
<keyword id="KW-1185">Reference proteome</keyword>
<keyword id="KW-0808">Transferase</keyword>